<comment type="function">
    <text evidence="7">Involved in some intermediate steps for the synthesis of the antibiotic polyketide bacillaene which is involved in secondary metabolism.</text>
</comment>
<comment type="cofactor">
    <cofactor evidence="8">
        <name>pantetheine 4'-phosphate</name>
        <dbReference type="ChEBI" id="CHEBI:47942"/>
    </cofactor>
    <text evidence="8">Binds 3 phosphopantetheines covalently.</text>
</comment>
<comment type="pathway">
    <text>Antibiotic biosynthesis; bacillaene biosynthesis.</text>
</comment>
<comment type="subcellular location">
    <subcellularLocation>
        <location evidence="6">Cytoplasm</location>
    </subcellularLocation>
</comment>
<proteinExistence type="evidence at protein level"/>
<name>PKSR_BACSU</name>
<gene>
    <name type="primary">pksR</name>
    <name type="ordered locus">BSU17220</name>
</gene>
<dbReference type="EC" id="2.3.1.-"/>
<dbReference type="EMBL" id="AL009126">
    <property type="protein sequence ID" value="CAB13606.2"/>
    <property type="molecule type" value="Genomic_DNA"/>
</dbReference>
<dbReference type="PIR" id="F69679">
    <property type="entry name" value="F69679"/>
</dbReference>
<dbReference type="RefSeq" id="NP_389604.2">
    <property type="nucleotide sequence ID" value="NC_000964.3"/>
</dbReference>
<dbReference type="RefSeq" id="WP_003245624.1">
    <property type="nucleotide sequence ID" value="NZ_OZ025638.1"/>
</dbReference>
<dbReference type="PDB" id="4U3V">
    <property type="method" value="X-ray"/>
    <property type="resolution" value="1.73 A"/>
    <property type="chains" value="A=1124-1395"/>
</dbReference>
<dbReference type="PDBsum" id="4U3V"/>
<dbReference type="SMR" id="O31784"/>
<dbReference type="FunCoup" id="O31784">
    <property type="interactions" value="16"/>
</dbReference>
<dbReference type="STRING" id="224308.BSU17220"/>
<dbReference type="ESTHER" id="bacsu-PKSR">
    <property type="family name" value="Thioesterase"/>
</dbReference>
<dbReference type="jPOST" id="O31784"/>
<dbReference type="PaxDb" id="224308-BSU17220"/>
<dbReference type="EnsemblBacteria" id="CAB13606">
    <property type="protein sequence ID" value="CAB13606"/>
    <property type="gene ID" value="BSU_17220"/>
</dbReference>
<dbReference type="GeneID" id="940036"/>
<dbReference type="KEGG" id="bsu:BSU17220"/>
<dbReference type="PATRIC" id="fig|224308.179.peg.1867"/>
<dbReference type="eggNOG" id="COG0236">
    <property type="taxonomic scope" value="Bacteria"/>
</dbReference>
<dbReference type="eggNOG" id="COG2227">
    <property type="taxonomic scope" value="Bacteria"/>
</dbReference>
<dbReference type="eggNOG" id="COG3319">
    <property type="taxonomic scope" value="Bacteria"/>
</dbReference>
<dbReference type="eggNOG" id="COG3321">
    <property type="taxonomic scope" value="Bacteria"/>
</dbReference>
<dbReference type="InParanoid" id="O31784"/>
<dbReference type="OrthoDB" id="2897140at2"/>
<dbReference type="PhylomeDB" id="O31784"/>
<dbReference type="BioCyc" id="BSUB:BSU17220-MONOMER"/>
<dbReference type="UniPathway" id="UPA01003"/>
<dbReference type="EvolutionaryTrace" id="O31784"/>
<dbReference type="Proteomes" id="UP000001570">
    <property type="component" value="Chromosome"/>
</dbReference>
<dbReference type="GO" id="GO:0005737">
    <property type="term" value="C:cytoplasm"/>
    <property type="evidence" value="ECO:0000318"/>
    <property type="project" value="GO_Central"/>
</dbReference>
<dbReference type="GO" id="GO:0004315">
    <property type="term" value="F:3-oxoacyl-[acyl-carrier-protein] synthase activity"/>
    <property type="evidence" value="ECO:0007669"/>
    <property type="project" value="InterPro"/>
</dbReference>
<dbReference type="GO" id="GO:0004312">
    <property type="term" value="F:fatty acid synthase activity"/>
    <property type="evidence" value="ECO:0000318"/>
    <property type="project" value="GO_Central"/>
</dbReference>
<dbReference type="GO" id="GO:0031177">
    <property type="term" value="F:phosphopantetheine binding"/>
    <property type="evidence" value="ECO:0007669"/>
    <property type="project" value="InterPro"/>
</dbReference>
<dbReference type="GO" id="GO:0071770">
    <property type="term" value="P:DIM/DIP cell wall layer assembly"/>
    <property type="evidence" value="ECO:0000318"/>
    <property type="project" value="GO_Central"/>
</dbReference>
<dbReference type="GO" id="GO:0006633">
    <property type="term" value="P:fatty acid biosynthetic process"/>
    <property type="evidence" value="ECO:0000318"/>
    <property type="project" value="GO_Central"/>
</dbReference>
<dbReference type="GO" id="GO:0046189">
    <property type="term" value="P:phenol-containing compound biosynthetic process"/>
    <property type="evidence" value="ECO:0007669"/>
    <property type="project" value="UniProtKB-ARBA"/>
</dbReference>
<dbReference type="GO" id="GO:0030639">
    <property type="term" value="P:polyketide biosynthetic process"/>
    <property type="evidence" value="ECO:0007669"/>
    <property type="project" value="UniProtKB-ARBA"/>
</dbReference>
<dbReference type="GO" id="GO:0009403">
    <property type="term" value="P:toxin biosynthetic process"/>
    <property type="evidence" value="ECO:0007669"/>
    <property type="project" value="UniProtKB-ARBA"/>
</dbReference>
<dbReference type="CDD" id="cd02440">
    <property type="entry name" value="AdoMet_MTases"/>
    <property type="match status" value="1"/>
</dbReference>
<dbReference type="CDD" id="cd00833">
    <property type="entry name" value="PKS"/>
    <property type="match status" value="2"/>
</dbReference>
<dbReference type="FunFam" id="3.40.50.150:FF:000650">
    <property type="entry name" value="Polyketide synthase RzxC"/>
    <property type="match status" value="1"/>
</dbReference>
<dbReference type="Gene3D" id="1.10.1240.100">
    <property type="match status" value="2"/>
</dbReference>
<dbReference type="Gene3D" id="3.40.47.10">
    <property type="match status" value="2"/>
</dbReference>
<dbReference type="Gene3D" id="1.10.1200.10">
    <property type="entry name" value="ACP-like"/>
    <property type="match status" value="3"/>
</dbReference>
<dbReference type="Gene3D" id="3.40.50.1820">
    <property type="entry name" value="alpha/beta hydrolase"/>
    <property type="match status" value="1"/>
</dbReference>
<dbReference type="Gene3D" id="3.10.129.110">
    <property type="entry name" value="Polyketide synthase dehydratase"/>
    <property type="match status" value="1"/>
</dbReference>
<dbReference type="Gene3D" id="3.40.50.150">
    <property type="entry name" value="Vaccinia Virus protein VP39"/>
    <property type="match status" value="1"/>
</dbReference>
<dbReference type="InterPro" id="IPR029058">
    <property type="entry name" value="AB_hydrolase_fold"/>
</dbReference>
<dbReference type="InterPro" id="IPR036736">
    <property type="entry name" value="ACP-like_sf"/>
</dbReference>
<dbReference type="InterPro" id="IPR018201">
    <property type="entry name" value="Ketoacyl_synth_AS"/>
</dbReference>
<dbReference type="InterPro" id="IPR014031">
    <property type="entry name" value="Ketoacyl_synth_C"/>
</dbReference>
<dbReference type="InterPro" id="IPR014030">
    <property type="entry name" value="Ketoacyl_synth_N"/>
</dbReference>
<dbReference type="InterPro" id="IPR013217">
    <property type="entry name" value="Methyltransf_12"/>
</dbReference>
<dbReference type="InterPro" id="IPR020841">
    <property type="entry name" value="PKS_Beta-ketoAc_synthase_dom"/>
</dbReference>
<dbReference type="InterPro" id="IPR042104">
    <property type="entry name" value="PKS_dehydratase_sf"/>
</dbReference>
<dbReference type="InterPro" id="IPR049551">
    <property type="entry name" value="PKS_DH_C"/>
</dbReference>
<dbReference type="InterPro" id="IPR049552">
    <property type="entry name" value="PKS_DH_N"/>
</dbReference>
<dbReference type="InterPro" id="IPR049900">
    <property type="entry name" value="PKS_mFAS_DH"/>
</dbReference>
<dbReference type="InterPro" id="IPR050091">
    <property type="entry name" value="PKS_NRPS_Biosynth_Enz"/>
</dbReference>
<dbReference type="InterPro" id="IPR020806">
    <property type="entry name" value="PKS_PP-bd"/>
</dbReference>
<dbReference type="InterPro" id="IPR009081">
    <property type="entry name" value="PP-bd_ACP"/>
</dbReference>
<dbReference type="InterPro" id="IPR006162">
    <property type="entry name" value="Ppantetheine_attach_site"/>
</dbReference>
<dbReference type="InterPro" id="IPR054514">
    <property type="entry name" value="RhiE-like_linker"/>
</dbReference>
<dbReference type="InterPro" id="IPR029063">
    <property type="entry name" value="SAM-dependent_MTases_sf"/>
</dbReference>
<dbReference type="InterPro" id="IPR001031">
    <property type="entry name" value="Thioesterase"/>
</dbReference>
<dbReference type="InterPro" id="IPR016039">
    <property type="entry name" value="Thiolase-like"/>
</dbReference>
<dbReference type="InterPro" id="IPR020615">
    <property type="entry name" value="Thiolase_acyl_enz_int_AS"/>
</dbReference>
<dbReference type="PANTHER" id="PTHR43775">
    <property type="entry name" value="FATTY ACID SYNTHASE"/>
    <property type="match status" value="1"/>
</dbReference>
<dbReference type="PANTHER" id="PTHR43775:SF37">
    <property type="entry name" value="SI:DKEY-61P9.11"/>
    <property type="match status" value="1"/>
</dbReference>
<dbReference type="Pfam" id="PF00109">
    <property type="entry name" value="ketoacyl-synt"/>
    <property type="match status" value="2"/>
</dbReference>
<dbReference type="Pfam" id="PF02801">
    <property type="entry name" value="Ketoacyl-synt_C"/>
    <property type="match status" value="2"/>
</dbReference>
<dbReference type="Pfam" id="PF08242">
    <property type="entry name" value="Methyltransf_12"/>
    <property type="match status" value="1"/>
</dbReference>
<dbReference type="Pfam" id="PF21089">
    <property type="entry name" value="PKS_DH_N"/>
    <property type="match status" value="1"/>
</dbReference>
<dbReference type="Pfam" id="PF00550">
    <property type="entry name" value="PP-binding"/>
    <property type="match status" value="3"/>
</dbReference>
<dbReference type="Pfam" id="PF14765">
    <property type="entry name" value="PS-DH"/>
    <property type="match status" value="1"/>
</dbReference>
<dbReference type="Pfam" id="PF22336">
    <property type="entry name" value="RhiE-like_linker"/>
    <property type="match status" value="2"/>
</dbReference>
<dbReference type="Pfam" id="PF00975">
    <property type="entry name" value="Thioesterase"/>
    <property type="match status" value="1"/>
</dbReference>
<dbReference type="SMART" id="SM00825">
    <property type="entry name" value="PKS_KS"/>
    <property type="match status" value="2"/>
</dbReference>
<dbReference type="SMART" id="SM00823">
    <property type="entry name" value="PKS_PP"/>
    <property type="match status" value="2"/>
</dbReference>
<dbReference type="SMART" id="SM01294">
    <property type="entry name" value="PKS_PP_betabranch"/>
    <property type="match status" value="1"/>
</dbReference>
<dbReference type="SUPFAM" id="SSF47336">
    <property type="entry name" value="ACP-like"/>
    <property type="match status" value="3"/>
</dbReference>
<dbReference type="SUPFAM" id="SSF53474">
    <property type="entry name" value="alpha/beta-Hydrolases"/>
    <property type="match status" value="1"/>
</dbReference>
<dbReference type="SUPFAM" id="SSF53335">
    <property type="entry name" value="S-adenosyl-L-methionine-dependent methyltransferases"/>
    <property type="match status" value="1"/>
</dbReference>
<dbReference type="SUPFAM" id="SSF53901">
    <property type="entry name" value="Thiolase-like"/>
    <property type="match status" value="2"/>
</dbReference>
<dbReference type="PROSITE" id="PS50075">
    <property type="entry name" value="CARRIER"/>
    <property type="match status" value="3"/>
</dbReference>
<dbReference type="PROSITE" id="PS00606">
    <property type="entry name" value="KS3_1"/>
    <property type="match status" value="1"/>
</dbReference>
<dbReference type="PROSITE" id="PS52004">
    <property type="entry name" value="KS3_2"/>
    <property type="match status" value="2"/>
</dbReference>
<dbReference type="PROSITE" id="PS00012">
    <property type="entry name" value="PHOSPHOPANTETHEINE"/>
    <property type="match status" value="2"/>
</dbReference>
<dbReference type="PROSITE" id="PS52019">
    <property type="entry name" value="PKS_MFAS_DH"/>
    <property type="match status" value="1"/>
</dbReference>
<dbReference type="PROSITE" id="PS00098">
    <property type="entry name" value="THIOLASE_1"/>
    <property type="match status" value="1"/>
</dbReference>
<organism>
    <name type="scientific">Bacillus subtilis (strain 168)</name>
    <dbReference type="NCBI Taxonomy" id="224308"/>
    <lineage>
        <taxon>Bacteria</taxon>
        <taxon>Bacillati</taxon>
        <taxon>Bacillota</taxon>
        <taxon>Bacilli</taxon>
        <taxon>Bacillales</taxon>
        <taxon>Bacillaceae</taxon>
        <taxon>Bacillus</taxon>
    </lineage>
</organism>
<reference key="1">
    <citation type="journal article" date="1997" name="Nature">
        <title>The complete genome sequence of the Gram-positive bacterium Bacillus subtilis.</title>
        <authorList>
            <person name="Kunst F."/>
            <person name="Ogasawara N."/>
            <person name="Moszer I."/>
            <person name="Albertini A.M."/>
            <person name="Alloni G."/>
            <person name="Azevedo V."/>
            <person name="Bertero M.G."/>
            <person name="Bessieres P."/>
            <person name="Bolotin A."/>
            <person name="Borchert S."/>
            <person name="Borriss R."/>
            <person name="Boursier L."/>
            <person name="Brans A."/>
            <person name="Braun M."/>
            <person name="Brignell S.C."/>
            <person name="Bron S."/>
            <person name="Brouillet S."/>
            <person name="Bruschi C.V."/>
            <person name="Caldwell B."/>
            <person name="Capuano V."/>
            <person name="Carter N.M."/>
            <person name="Choi S.-K."/>
            <person name="Codani J.-J."/>
            <person name="Connerton I.F."/>
            <person name="Cummings N.J."/>
            <person name="Daniel R.A."/>
            <person name="Denizot F."/>
            <person name="Devine K.M."/>
            <person name="Duesterhoeft A."/>
            <person name="Ehrlich S.D."/>
            <person name="Emmerson P.T."/>
            <person name="Entian K.-D."/>
            <person name="Errington J."/>
            <person name="Fabret C."/>
            <person name="Ferrari E."/>
            <person name="Foulger D."/>
            <person name="Fritz C."/>
            <person name="Fujita M."/>
            <person name="Fujita Y."/>
            <person name="Fuma S."/>
            <person name="Galizzi A."/>
            <person name="Galleron N."/>
            <person name="Ghim S.-Y."/>
            <person name="Glaser P."/>
            <person name="Goffeau A."/>
            <person name="Golightly E.J."/>
            <person name="Grandi G."/>
            <person name="Guiseppi G."/>
            <person name="Guy B.J."/>
            <person name="Haga K."/>
            <person name="Haiech J."/>
            <person name="Harwood C.R."/>
            <person name="Henaut A."/>
            <person name="Hilbert H."/>
            <person name="Holsappel S."/>
            <person name="Hosono S."/>
            <person name="Hullo M.-F."/>
            <person name="Itaya M."/>
            <person name="Jones L.-M."/>
            <person name="Joris B."/>
            <person name="Karamata D."/>
            <person name="Kasahara Y."/>
            <person name="Klaerr-Blanchard M."/>
            <person name="Klein C."/>
            <person name="Kobayashi Y."/>
            <person name="Koetter P."/>
            <person name="Koningstein G."/>
            <person name="Krogh S."/>
            <person name="Kumano M."/>
            <person name="Kurita K."/>
            <person name="Lapidus A."/>
            <person name="Lardinois S."/>
            <person name="Lauber J."/>
            <person name="Lazarevic V."/>
            <person name="Lee S.-M."/>
            <person name="Levine A."/>
            <person name="Liu H."/>
            <person name="Masuda S."/>
            <person name="Mauel C."/>
            <person name="Medigue C."/>
            <person name="Medina N."/>
            <person name="Mellado R.P."/>
            <person name="Mizuno M."/>
            <person name="Moestl D."/>
            <person name="Nakai S."/>
            <person name="Noback M."/>
            <person name="Noone D."/>
            <person name="O'Reilly M."/>
            <person name="Ogawa K."/>
            <person name="Ogiwara A."/>
            <person name="Oudega B."/>
            <person name="Park S.-H."/>
            <person name="Parro V."/>
            <person name="Pohl T.M."/>
            <person name="Portetelle D."/>
            <person name="Porwollik S."/>
            <person name="Prescott A.M."/>
            <person name="Presecan E."/>
            <person name="Pujic P."/>
            <person name="Purnelle B."/>
            <person name="Rapoport G."/>
            <person name="Rey M."/>
            <person name="Reynolds S."/>
            <person name="Rieger M."/>
            <person name="Rivolta C."/>
            <person name="Rocha E."/>
            <person name="Roche B."/>
            <person name="Rose M."/>
            <person name="Sadaie Y."/>
            <person name="Sato T."/>
            <person name="Scanlan E."/>
            <person name="Schleich S."/>
            <person name="Schroeter R."/>
            <person name="Scoffone F."/>
            <person name="Sekiguchi J."/>
            <person name="Sekowska A."/>
            <person name="Seror S.J."/>
            <person name="Serror P."/>
            <person name="Shin B.-S."/>
            <person name="Soldo B."/>
            <person name="Sorokin A."/>
            <person name="Tacconi E."/>
            <person name="Takagi T."/>
            <person name="Takahashi H."/>
            <person name="Takemaru K."/>
            <person name="Takeuchi M."/>
            <person name="Tamakoshi A."/>
            <person name="Tanaka T."/>
            <person name="Terpstra P."/>
            <person name="Tognoni A."/>
            <person name="Tosato V."/>
            <person name="Uchiyama S."/>
            <person name="Vandenbol M."/>
            <person name="Vannier F."/>
            <person name="Vassarotti A."/>
            <person name="Viari A."/>
            <person name="Wambutt R."/>
            <person name="Wedler E."/>
            <person name="Wedler H."/>
            <person name="Weitzenegger T."/>
            <person name="Winters P."/>
            <person name="Wipat A."/>
            <person name="Yamamoto H."/>
            <person name="Yamane K."/>
            <person name="Yasumoto K."/>
            <person name="Yata K."/>
            <person name="Yoshida K."/>
            <person name="Yoshikawa H.-F."/>
            <person name="Zumstein E."/>
            <person name="Yoshikawa H."/>
            <person name="Danchin A."/>
        </authorList>
    </citation>
    <scope>NUCLEOTIDE SEQUENCE [LARGE SCALE GENOMIC DNA]</scope>
    <source>
        <strain>168</strain>
    </source>
</reference>
<reference key="2">
    <citation type="journal article" date="2009" name="Microbiology">
        <title>From a consortium sequence to a unified sequence: the Bacillus subtilis 168 reference genome a decade later.</title>
        <authorList>
            <person name="Barbe V."/>
            <person name="Cruveiller S."/>
            <person name="Kunst F."/>
            <person name="Lenoble P."/>
            <person name="Meurice G."/>
            <person name="Sekowska A."/>
            <person name="Vallenet D."/>
            <person name="Wang T."/>
            <person name="Moszer I."/>
            <person name="Medigue C."/>
            <person name="Danchin A."/>
        </authorList>
    </citation>
    <scope>SEQUENCE REVISION TO 731 AND 1926</scope>
</reference>
<reference key="3">
    <citation type="journal article" date="2007" name="Proc. Natl. Acad. Sci. U.S.A.">
        <title>A singular enzymatic megacomplex from Bacillus subtilis.</title>
        <authorList>
            <person name="Straight P.D."/>
            <person name="Fischbach M.A."/>
            <person name="Walsh C.T."/>
            <person name="Rudner D.Z."/>
            <person name="Kolter R."/>
        </authorList>
    </citation>
    <scope>SUBCELLULAR LOCATION</scope>
    <source>
        <strain>168 / Marburg / ATCC 6051 / DSM 10 / JCM 1465 / NBRC 13719 / NCIMB 3610 / NRRL NRS-744 / VKM B-501</strain>
    </source>
</reference>
<reference key="4">
    <citation type="journal article" date="2007" name="Proc. Natl. Acad. Sci. U.S.A.">
        <title>The identification of bacillaene, the product of the PksX megacomplex in Bacillus subtilis.</title>
        <authorList>
            <person name="Butcher R.A."/>
            <person name="Schroeder F.C."/>
            <person name="Fischbach M.A."/>
            <person name="Straight P.D."/>
            <person name="Kolter R."/>
            <person name="Walsh C.T."/>
            <person name="Clardy J."/>
        </authorList>
    </citation>
    <scope>FUNCTION IN BACILLAENE BIOSYNTHESIS</scope>
    <source>
        <strain>168 / Marburg / ATCC 6051 / DSM 10 / JCM 1465 / NBRC 13719 / NCIMB 3610 / NRRL NRS-744 / VKM B-501</strain>
    </source>
</reference>
<accession>O31784</accession>
<sequence>MLNTEDILCKMLFAQLQSIGFFTESKSQPVLENFYGRWFEESQSILERHQFLKRTENGHVPTRSIGTMSELWKEWNEQKFDLLQDNNMKAMVTLVETALKALPEILTGKASATDILFPNSSMDLVEGVYKNNQVADYFNDVLADTLTAYLQERLKQEPEAKIRILEIGAGTGGTSAAVFQKLKAWQTHIKEYCYTDLSKAFLMHAENKYGPDNPYLTYKRFNVEEPASEQHIDAGGYDAVIAANVLHATKNIRQTLRNAKAVLKKNGLLLLNEISNHNIYSHLTFGLLEGWWLYEDPDLRIPGCPGLYPDTWKMVLESEGFRYVSFMAEQSHQLGQQIIAAESNGVVRQKKRTEAEEDPSHIQMNAEIDHSQESDSLIEQTAQFVKHTLAKSIKLSPERIHEDTTFEKYGIDSILQVNFIRELEKVTGELPKTILFEHNNTKELVEYLVKGHENKLRTALLKEKTKPAKNEAPLQTERTDPNKPFTFHTRRFVTEQEVTETQLANTEPLKIEKTSNLQGTHFNDSSTEDIAIIGVSGRYPMSNSLEELWGHLIAGDNCITEAPESRWRTSLLKTLSKDPKKPANKKRYGGFLQDIEAFDHQLFEVEQNRVMEMTPELRLCLETVWETFEDGGYTRTRLDKLRDDDGVGVFIGNMYNQYFWNIPSLEQAVLSSNGGDWHIANRVSHFFNLTGPSIAVSSACSSSLNAIHLACESLKLKNCSMAIAGGVNLTLDLSKYDSLERANLLGSGNQSKSFGTGNGLIPGEGVGAVLLKPLSKAMEDQDHIYAVIKSSFANHSGGRQMYTAPDPKQQAKLIVKSIQQSGIDPETIGYIESAANGSALGDPIEVIALTNAFQQYTNKKQFCAIGSVKSNLGHLEAASGISQLTKVLLQMKKGTLVPTINAMPVNPNIKLEHTAFYLQEQTEPWHRLNDPETGKQLPRRSMINSFGAGGAYANLIIEEYMETAPEKEHIAPRQQEFTAVFSAKTKWSLLSYLENMQLFLEKEASLDIEPVVQALHRRNHNLEHRTAFTVASTQELIEKLKVFRTSRESSLQQGIYTSFDLQPCAESASRDREINAAEQWAQGALIAFKEADIGNRTGWVHLPHYAFDHNTSFHFDVSSINEKSSDVEDNINQPVIQDQFTYDEPYVQGHVFNNERVLVGATYGSLAIEAFFNLFPEENSGRISKLSYISPIVIKQGETIELQAKPLQKDQVIELQIMYREPSSGLWKPAAIGQCGIGSFEPKKVNIENVKHSLTKLHHIDQMYKTGNGPEWGELFKTITHLYRDHKSILAKIRLPQSGLANGHHYTVSPLMTNSAYLAILSFLEQFDMTGGFLPFGINDIQFTKQTIKGDCWLLITLVKNTGDMLLFDVDVINESSETVLHYSGYSLKQLRISNQRGNQNKAIKASNLKARIRSYVTDKLAVNMADPSKLSIAKAHIMDFGIDSSQLVALTREMEAETKIELNPTLFFEYPTIQELIDFFADKHEASFAQLFGEAHQQEERPAQIENQMKQIPAYETNTDKTIEHAADGIAIIGMSGQFPKANSVTEFWDNLVQGKNCVSEVPKERWDWRKYAAADKEGQSSLQWGGFIEGIGEFDPLFFGISPKEAANMDPQEFLLLIHAWKAMEDAGLTGQVLSSRPTGVFVAAGNTDTAVVPSLIPNRISYALDVKGPSEYYEAACSSALVALHRAIQSIRNGECEQAIVGAVNLLLSPKGFIGFDSMGYLSEKGQAKSFQADANGFVRSEGAGVLIIKPLQKAIEDSDHIYSVIKGSGVSHGGRGMSLHAPNPAGMKDAMLKAYQGAQIDPKTVTYIEAHGIASPLADAIEIEALKSGCSQLELELPQEVREEAPCYISSLKPSIGHGELVSGMAALMKVSMAMKHQTIPGISGFSSLNDQVSLKGTRFRVTAENQQWRDLSDDAGKKIPRRASINSYSFGGVNAHVILEEYIPLPKPPVSMSENGAHIVVLSAKNQDRLKAIAQQQLDYVNKQQELSLQDYAYTLQTGREEMEDRLALVVRSKEELVIGLQACLAEKGDKLKSSVPVFSGNAENGSSDLEALLDGPLREMVIETLLSENNLEKIAFCWTKGVQIPWEKLYQGKGARRIPLPTYPFEKRSCWNGFQAVENTPSVSQDERINNSSDHHILANVLGMAPDELQFHKPLQQYGFDSISCIQLLQQLQSKVDPLIVLTELQACHTVQDMMDLIAKKQEDTSLQNDQARTFPELIPLNDGKRGRPVFWFHGGVGGVEIYQQFAQKSQRPFYGIQARGFMTDSAPLHGIEQMASYYIEIIRSIQPEGPYDVGGYSLGGMIAYEVTRQLQSQGLAVKSMVMIDSPYRSETKENEASMKTSMLQTINTMLASIAKREKFTDVLISREEVDISLEDEEFLSELIDLAKERGLNKPDKQIRAQAQQMMKTQRAYDLESYTVKPLPDPETVKCYYFRNKSRSFFGDLDTYFTLSNEKEPFDQAAYWEEWERQIPHFHLVDVDSSNHFMILTEPKASTALLEFCEKLYSNRGVVNANFLKAFRKKHEAREEKETDELVKR</sequence>
<feature type="chain" id="PRO_0000379979" description="Polyketide synthase PksR">
    <location>
        <begin position="1"/>
        <end position="2543"/>
    </location>
</feature>
<feature type="domain" description="Carrier 1" evidence="1">
    <location>
        <begin position="376"/>
        <end position="452"/>
    </location>
</feature>
<feature type="domain" description="Ketosynthase family 3 (KS3) 1" evidence="2">
    <location>
        <begin position="527"/>
        <end position="959"/>
    </location>
</feature>
<feature type="domain" description="PKS/mFAS DH" evidence="3">
    <location>
        <begin position="1114"/>
        <end position="1397"/>
    </location>
</feature>
<feature type="domain" description="Carrier 2" evidence="1">
    <location>
        <begin position="1407"/>
        <end position="1485"/>
    </location>
</feature>
<feature type="domain" description="Ketosynthase family 3 (KS3) 2" evidence="2">
    <location>
        <begin position="1528"/>
        <end position="1946"/>
    </location>
</feature>
<feature type="domain" description="Carrier 3" evidence="1">
    <location>
        <begin position="2134"/>
        <end position="2208"/>
    </location>
</feature>
<feature type="region of interest" description="Methyltransferase">
    <location>
        <begin position="165"/>
        <end position="269"/>
    </location>
</feature>
<feature type="region of interest" description="Disordered" evidence="5">
    <location>
        <begin position="465"/>
        <end position="485"/>
    </location>
</feature>
<feature type="region of interest" description="N-terminal hotdog fold" evidence="3">
    <location>
        <begin position="1114"/>
        <end position="1242"/>
    </location>
</feature>
<feature type="region of interest" description="C-terminal hotdog fold" evidence="3">
    <location>
        <begin position="1255"/>
        <end position="1397"/>
    </location>
</feature>
<feature type="region of interest" description="Thioesterase">
    <location>
        <begin position="2234"/>
        <end position="2514"/>
    </location>
</feature>
<feature type="active site" description="For beta-ketoacyl synthase 1 activity" evidence="4">
    <location>
        <position position="700"/>
    </location>
</feature>
<feature type="active site" description="For beta-ketoacyl synthase 2 activity" evidence="2">
    <location>
        <position position="1680"/>
    </location>
</feature>
<feature type="active site" description="For beta-ketoacyl synthase 2 activity" evidence="2">
    <location>
        <position position="1815"/>
    </location>
</feature>
<feature type="active site" description="For beta-ketoacyl synthase 2 activity" evidence="2">
    <location>
        <position position="1862"/>
    </location>
</feature>
<feature type="modified residue" description="O-(pantetheine 4'-phosphoryl)serine" evidence="1">
    <location>
        <position position="413"/>
    </location>
</feature>
<feature type="modified residue" description="O-(pantetheine 4'-phosphoryl)serine" evidence="1">
    <location>
        <position position="1445"/>
    </location>
</feature>
<feature type="modified residue" description="O-(pantetheine 4'-phosphoryl)serine" evidence="1">
    <location>
        <position position="2168"/>
    </location>
</feature>
<feature type="strand" evidence="9">
    <location>
        <begin position="1136"/>
        <end position="1141"/>
    </location>
</feature>
<feature type="helix" evidence="9">
    <location>
        <begin position="1145"/>
        <end position="1148"/>
    </location>
</feature>
<feature type="strand" evidence="9">
    <location>
        <begin position="1150"/>
        <end position="1152"/>
    </location>
</feature>
<feature type="strand" evidence="9">
    <location>
        <begin position="1155"/>
        <end position="1157"/>
    </location>
</feature>
<feature type="helix" evidence="9">
    <location>
        <begin position="1162"/>
        <end position="1174"/>
    </location>
</feature>
<feature type="strand" evidence="9">
    <location>
        <begin position="1179"/>
        <end position="1188"/>
    </location>
</feature>
<feature type="strand" evidence="9">
    <location>
        <begin position="1199"/>
        <end position="1207"/>
    </location>
</feature>
<feature type="strand" evidence="9">
    <location>
        <begin position="1213"/>
        <end position="1220"/>
    </location>
</feature>
<feature type="turn" evidence="9">
    <location>
        <begin position="1222"/>
        <end position="1224"/>
    </location>
</feature>
<feature type="strand" evidence="9">
    <location>
        <begin position="1227"/>
        <end position="1237"/>
    </location>
</feature>
<feature type="helix" evidence="9">
    <location>
        <begin position="1247"/>
        <end position="1252"/>
    </location>
</feature>
<feature type="strand" evidence="9">
    <location>
        <begin position="1254"/>
        <end position="1256"/>
    </location>
</feature>
<feature type="helix" evidence="9">
    <location>
        <begin position="1274"/>
        <end position="1276"/>
    </location>
</feature>
<feature type="strand" evidence="9">
    <location>
        <begin position="1279"/>
        <end position="1285"/>
    </location>
</feature>
<feature type="strand" evidence="9">
    <location>
        <begin position="1288"/>
        <end position="1295"/>
    </location>
</feature>
<feature type="helix" evidence="9">
    <location>
        <begin position="1310"/>
        <end position="1324"/>
    </location>
</feature>
<feature type="strand" evidence="9">
    <location>
        <begin position="1334"/>
        <end position="1346"/>
    </location>
</feature>
<feature type="strand" evidence="9">
    <location>
        <begin position="1350"/>
        <end position="1362"/>
    </location>
</feature>
<feature type="strand" evidence="9">
    <location>
        <begin position="1365"/>
        <end position="1373"/>
    </location>
</feature>
<feature type="strand" evidence="9">
    <location>
        <begin position="1377"/>
        <end position="1389"/>
    </location>
</feature>
<protein>
    <recommendedName>
        <fullName>Polyketide synthase PksR</fullName>
        <ecNumber>2.3.1.-</ecNumber>
    </recommendedName>
</protein>
<keyword id="KW-0002">3D-structure</keyword>
<keyword id="KW-0012">Acyltransferase</keyword>
<keyword id="KW-0963">Cytoplasm</keyword>
<keyword id="KW-0511">Multifunctional enzyme</keyword>
<keyword id="KW-0521">NADP</keyword>
<keyword id="KW-0596">Phosphopantetheine</keyword>
<keyword id="KW-0597">Phosphoprotein</keyword>
<keyword id="KW-1185">Reference proteome</keyword>
<keyword id="KW-0677">Repeat</keyword>
<keyword id="KW-0808">Transferase</keyword>
<evidence type="ECO:0000255" key="1">
    <source>
        <dbReference type="PROSITE-ProRule" id="PRU00258"/>
    </source>
</evidence>
<evidence type="ECO:0000255" key="2">
    <source>
        <dbReference type="PROSITE-ProRule" id="PRU01348"/>
    </source>
</evidence>
<evidence type="ECO:0000255" key="3">
    <source>
        <dbReference type="PROSITE-ProRule" id="PRU01363"/>
    </source>
</evidence>
<evidence type="ECO:0000255" key="4">
    <source>
        <dbReference type="PROSITE-ProRule" id="PRU10022"/>
    </source>
</evidence>
<evidence type="ECO:0000256" key="5">
    <source>
        <dbReference type="SAM" id="MobiDB-lite"/>
    </source>
</evidence>
<evidence type="ECO:0000269" key="6">
    <source>
    </source>
</evidence>
<evidence type="ECO:0000269" key="7">
    <source>
    </source>
</evidence>
<evidence type="ECO:0000305" key="8"/>
<evidence type="ECO:0007829" key="9">
    <source>
        <dbReference type="PDB" id="4U3V"/>
    </source>
</evidence>